<feature type="chain" id="PRO_0000267739" description="3-hydroxydecanoyl-[acyl-carrier-protein] dehydratase">
    <location>
        <begin position="1"/>
        <end position="172"/>
    </location>
</feature>
<feature type="active site" evidence="1">
    <location>
        <position position="71"/>
    </location>
</feature>
<organism>
    <name type="scientific">Pseudoalteromonas atlantica (strain T6c / ATCC BAA-1087)</name>
    <dbReference type="NCBI Taxonomy" id="3042615"/>
    <lineage>
        <taxon>Bacteria</taxon>
        <taxon>Pseudomonadati</taxon>
        <taxon>Pseudomonadota</taxon>
        <taxon>Gammaproteobacteria</taxon>
        <taxon>Alteromonadales</taxon>
        <taxon>Alteromonadaceae</taxon>
        <taxon>Paraglaciecola</taxon>
    </lineage>
</organism>
<comment type="function">
    <text evidence="1">Necessary for the introduction of cis unsaturation into fatty acids. Catalyzes the dehydration of (3R)-3-hydroxydecanoyl-ACP to E-(2)-decenoyl-ACP and then its isomerization to Z-(3)-decenoyl-ACP. Can catalyze the dehydratase reaction for beta-hydroxyacyl-ACPs with saturated chain lengths up to 16:0, being most active on intermediate chain length.</text>
</comment>
<comment type="catalytic activity">
    <reaction evidence="1">
        <text>a (3R)-hydroxyacyl-[ACP] = a (2E)-enoyl-[ACP] + H2O</text>
        <dbReference type="Rhea" id="RHEA:13097"/>
        <dbReference type="Rhea" id="RHEA-COMP:9925"/>
        <dbReference type="Rhea" id="RHEA-COMP:9945"/>
        <dbReference type="ChEBI" id="CHEBI:15377"/>
        <dbReference type="ChEBI" id="CHEBI:78784"/>
        <dbReference type="ChEBI" id="CHEBI:78827"/>
        <dbReference type="EC" id="4.2.1.59"/>
    </reaction>
</comment>
<comment type="catalytic activity">
    <reaction evidence="1">
        <text>(3R)-hydroxydecanoyl-[ACP] = (2E)-decenoyl-[ACP] + H2O</text>
        <dbReference type="Rhea" id="RHEA:41860"/>
        <dbReference type="Rhea" id="RHEA-COMP:9638"/>
        <dbReference type="Rhea" id="RHEA-COMP:9639"/>
        <dbReference type="ChEBI" id="CHEBI:15377"/>
        <dbReference type="ChEBI" id="CHEBI:78466"/>
        <dbReference type="ChEBI" id="CHEBI:78467"/>
    </reaction>
</comment>
<comment type="catalytic activity">
    <reaction evidence="1">
        <text>(2E)-decenoyl-[ACP] = (3Z)-decenoyl-[ACP]</text>
        <dbReference type="Rhea" id="RHEA:23568"/>
        <dbReference type="Rhea" id="RHEA-COMP:9639"/>
        <dbReference type="Rhea" id="RHEA-COMP:9927"/>
        <dbReference type="ChEBI" id="CHEBI:78467"/>
        <dbReference type="ChEBI" id="CHEBI:78798"/>
        <dbReference type="EC" id="5.3.3.14"/>
    </reaction>
</comment>
<comment type="pathway">
    <text evidence="1">Lipid metabolism; fatty acid biosynthesis.</text>
</comment>
<comment type="subunit">
    <text evidence="1">Homodimer.</text>
</comment>
<comment type="subcellular location">
    <subcellularLocation>
        <location evidence="1">Cytoplasm</location>
    </subcellularLocation>
</comment>
<comment type="similarity">
    <text evidence="1">Belongs to the thioester dehydratase family. FabA subfamily.</text>
</comment>
<reference key="1">
    <citation type="submission" date="2006-06" db="EMBL/GenBank/DDBJ databases">
        <title>Complete sequence of Pseudoalteromonas atlantica T6c.</title>
        <authorList>
            <consortium name="US DOE Joint Genome Institute"/>
            <person name="Copeland A."/>
            <person name="Lucas S."/>
            <person name="Lapidus A."/>
            <person name="Barry K."/>
            <person name="Detter J.C."/>
            <person name="Glavina del Rio T."/>
            <person name="Hammon N."/>
            <person name="Israni S."/>
            <person name="Dalin E."/>
            <person name="Tice H."/>
            <person name="Pitluck S."/>
            <person name="Saunders E."/>
            <person name="Brettin T."/>
            <person name="Bruce D."/>
            <person name="Han C."/>
            <person name="Tapia R."/>
            <person name="Gilna P."/>
            <person name="Schmutz J."/>
            <person name="Larimer F."/>
            <person name="Land M."/>
            <person name="Hauser L."/>
            <person name="Kyrpides N."/>
            <person name="Kim E."/>
            <person name="Karls A.C."/>
            <person name="Bartlett D."/>
            <person name="Higgins B.P."/>
            <person name="Richardson P."/>
        </authorList>
    </citation>
    <scope>NUCLEOTIDE SEQUENCE [LARGE SCALE GENOMIC DNA]</scope>
    <source>
        <strain>T6c / ATCC BAA-1087</strain>
    </source>
</reference>
<protein>
    <recommendedName>
        <fullName evidence="1">3-hydroxydecanoyl-[acyl-carrier-protein] dehydratase</fullName>
        <ecNumber evidence="1">4.2.1.59</ecNumber>
    </recommendedName>
    <alternativeName>
        <fullName evidence="1">3-hydroxyacyl-[acyl-carrier-protein] dehydratase FabA</fullName>
    </alternativeName>
    <alternativeName>
        <fullName evidence="1">Beta-hydroxydecanoyl thioester dehydrase</fullName>
    </alternativeName>
    <alternativeName>
        <fullName evidence="1">Trans-2-decenoyl-[acyl-carrier-protein] isomerase</fullName>
        <ecNumber evidence="1">5.3.3.14</ecNumber>
    </alternativeName>
</protein>
<sequence>MTINQDSFTKEELLACSRGELFGPGNSQLPAPNMLMMDRIVKISEEDGEHGKGVIIAELDITPDLWFFDCHFPGDPVMPGCLGLDAMWQLVGFFLGWCGGPGKGRALGVGEVKFSGQILPTAKKVTYKIDMKRVIKRKLFMGIGDGEVSVDGRVIYQAKDLKVGLFQDTSNF</sequence>
<dbReference type="EC" id="4.2.1.59" evidence="1"/>
<dbReference type="EC" id="5.3.3.14" evidence="1"/>
<dbReference type="EMBL" id="CP000388">
    <property type="protein sequence ID" value="ABG40527.1"/>
    <property type="molecule type" value="Genomic_DNA"/>
</dbReference>
<dbReference type="RefSeq" id="WP_006993975.1">
    <property type="nucleotide sequence ID" value="NC_008228.1"/>
</dbReference>
<dbReference type="SMR" id="Q15UB1"/>
<dbReference type="STRING" id="342610.Patl_2009"/>
<dbReference type="KEGG" id="pat:Patl_2009"/>
<dbReference type="eggNOG" id="COG0764">
    <property type="taxonomic scope" value="Bacteria"/>
</dbReference>
<dbReference type="HOGENOM" id="CLU_097925_0_0_6"/>
<dbReference type="OrthoDB" id="9786735at2"/>
<dbReference type="UniPathway" id="UPA00094"/>
<dbReference type="Proteomes" id="UP000001981">
    <property type="component" value="Chromosome"/>
</dbReference>
<dbReference type="GO" id="GO:0005737">
    <property type="term" value="C:cytoplasm"/>
    <property type="evidence" value="ECO:0007669"/>
    <property type="project" value="UniProtKB-SubCell"/>
</dbReference>
<dbReference type="GO" id="GO:0019171">
    <property type="term" value="F:(3R)-hydroxyacyl-[acyl-carrier-protein] dehydratase activity"/>
    <property type="evidence" value="ECO:0007669"/>
    <property type="project" value="UniProtKB-UniRule"/>
</dbReference>
<dbReference type="GO" id="GO:0034017">
    <property type="term" value="F:trans-2-decenoyl-acyl-carrier-protein isomerase activity"/>
    <property type="evidence" value="ECO:0007669"/>
    <property type="project" value="UniProtKB-UniRule"/>
</dbReference>
<dbReference type="GO" id="GO:0006636">
    <property type="term" value="P:unsaturated fatty acid biosynthetic process"/>
    <property type="evidence" value="ECO:0007669"/>
    <property type="project" value="UniProtKB-UniRule"/>
</dbReference>
<dbReference type="CDD" id="cd01287">
    <property type="entry name" value="FabA"/>
    <property type="match status" value="1"/>
</dbReference>
<dbReference type="FunFam" id="3.10.129.10:FF:000003">
    <property type="entry name" value="3-hydroxydecanoyl-[acyl-carrier-protein] dehydratase"/>
    <property type="match status" value="1"/>
</dbReference>
<dbReference type="Gene3D" id="3.10.129.10">
    <property type="entry name" value="Hotdog Thioesterase"/>
    <property type="match status" value="1"/>
</dbReference>
<dbReference type="HAMAP" id="MF_00405">
    <property type="entry name" value="FabA"/>
    <property type="match status" value="1"/>
</dbReference>
<dbReference type="InterPro" id="IPR010083">
    <property type="entry name" value="FabA"/>
</dbReference>
<dbReference type="InterPro" id="IPR013114">
    <property type="entry name" value="FabA_FabZ"/>
</dbReference>
<dbReference type="InterPro" id="IPR029069">
    <property type="entry name" value="HotDog_dom_sf"/>
</dbReference>
<dbReference type="NCBIfam" id="TIGR01749">
    <property type="entry name" value="fabA"/>
    <property type="match status" value="1"/>
</dbReference>
<dbReference type="NCBIfam" id="NF003509">
    <property type="entry name" value="PRK05174.1"/>
    <property type="match status" value="1"/>
</dbReference>
<dbReference type="PANTHER" id="PTHR30272">
    <property type="entry name" value="3-HYDROXYACYL-[ACYL-CARRIER-PROTEIN] DEHYDRATASE"/>
    <property type="match status" value="1"/>
</dbReference>
<dbReference type="PANTHER" id="PTHR30272:SF8">
    <property type="entry name" value="3-HYDROXYDECANOYL-[ACYL-CARRIER-PROTEIN] DEHYDRATASE"/>
    <property type="match status" value="1"/>
</dbReference>
<dbReference type="Pfam" id="PF07977">
    <property type="entry name" value="FabA"/>
    <property type="match status" value="1"/>
</dbReference>
<dbReference type="SUPFAM" id="SSF54637">
    <property type="entry name" value="Thioesterase/thiol ester dehydrase-isomerase"/>
    <property type="match status" value="1"/>
</dbReference>
<evidence type="ECO:0000255" key="1">
    <source>
        <dbReference type="HAMAP-Rule" id="MF_00405"/>
    </source>
</evidence>
<accession>Q15UB1</accession>
<keyword id="KW-0963">Cytoplasm</keyword>
<keyword id="KW-0275">Fatty acid biosynthesis</keyword>
<keyword id="KW-0276">Fatty acid metabolism</keyword>
<keyword id="KW-0413">Isomerase</keyword>
<keyword id="KW-0444">Lipid biosynthesis</keyword>
<keyword id="KW-0443">Lipid metabolism</keyword>
<keyword id="KW-0456">Lyase</keyword>
<name>FABA_PSEA6</name>
<proteinExistence type="inferred from homology"/>
<gene>
    <name evidence="1" type="primary">fabA</name>
    <name type="ordered locus">Patl_2009</name>
</gene>